<feature type="chain" id="PRO_0000143669" description="Maturase K">
    <location>
        <begin position="1"/>
        <end position="507"/>
    </location>
</feature>
<sequence>MEELQRYFKMDRSQKRDFLYPLLFQEYIYALAHDFGLTKLIPYESMQILSYENKYSSLIVKRLIIRMYQQKHLIIFDNDSKKKKFLGHNKNLYSQMISEGFAXIVKIPFALRLVSSYQGKEIEKSINLGSIHSTFPFLEDKFVHLNHVLDVLIPYPIHFELLVQNLRCWIQDASFLHLLRFFLYEYHNWNSFTTQKMKQNSLFFKENRRFFLFLYNFHVYESESIFLFLRKKSYHLRSISSIAFLDRTHFFGKIEHLKVVFRNDFHTMLWLFKDPFMHYFRYQGKSIMSSKGTPLLMKKWKYYLVNLWECHFYFWSQPNRIHINQLSNHFLNFLGYLSSVRPNPSVVRNQMLENAFIIDIAINKLNTLVPIIPLIGSLAKAKFCNLSGQSISKPAWTDSLDSDIIERFGRICRNFSHYYSGSSKKKPLYRIKYILRLSCARTLARKHKSTVRSFLKRLGSEFLEEFLIEEELVLSFILPKISSSSHRLSKERIWYFDIIRINDLMNL</sequence>
<geneLocation type="chloroplast"/>
<proteinExistence type="inferred from homology"/>
<evidence type="ECO:0000255" key="1">
    <source>
        <dbReference type="HAMAP-Rule" id="MF_01390"/>
    </source>
</evidence>
<accession>Q507R6</accession>
<dbReference type="EMBL" id="AY954199">
    <property type="protein sequence ID" value="AAY21346.1"/>
    <property type="molecule type" value="Genomic_DNA"/>
</dbReference>
<dbReference type="GO" id="GO:0009507">
    <property type="term" value="C:chloroplast"/>
    <property type="evidence" value="ECO:0007669"/>
    <property type="project" value="UniProtKB-SubCell"/>
</dbReference>
<dbReference type="GO" id="GO:0003723">
    <property type="term" value="F:RNA binding"/>
    <property type="evidence" value="ECO:0007669"/>
    <property type="project" value="UniProtKB-KW"/>
</dbReference>
<dbReference type="GO" id="GO:0006397">
    <property type="term" value="P:mRNA processing"/>
    <property type="evidence" value="ECO:0007669"/>
    <property type="project" value="UniProtKB-KW"/>
</dbReference>
<dbReference type="GO" id="GO:0008380">
    <property type="term" value="P:RNA splicing"/>
    <property type="evidence" value="ECO:0007669"/>
    <property type="project" value="UniProtKB-UniRule"/>
</dbReference>
<dbReference type="GO" id="GO:0008033">
    <property type="term" value="P:tRNA processing"/>
    <property type="evidence" value="ECO:0007669"/>
    <property type="project" value="UniProtKB-KW"/>
</dbReference>
<dbReference type="HAMAP" id="MF_01390">
    <property type="entry name" value="MatK"/>
    <property type="match status" value="1"/>
</dbReference>
<dbReference type="InterPro" id="IPR024937">
    <property type="entry name" value="Domain_X"/>
</dbReference>
<dbReference type="InterPro" id="IPR002866">
    <property type="entry name" value="Maturase_MatK"/>
</dbReference>
<dbReference type="InterPro" id="IPR024942">
    <property type="entry name" value="Maturase_MatK_N"/>
</dbReference>
<dbReference type="PANTHER" id="PTHR34811">
    <property type="entry name" value="MATURASE K"/>
    <property type="match status" value="1"/>
</dbReference>
<dbReference type="PANTHER" id="PTHR34811:SF1">
    <property type="entry name" value="MATURASE K"/>
    <property type="match status" value="1"/>
</dbReference>
<dbReference type="Pfam" id="PF01348">
    <property type="entry name" value="Intron_maturas2"/>
    <property type="match status" value="1"/>
</dbReference>
<dbReference type="Pfam" id="PF01824">
    <property type="entry name" value="MatK_N"/>
    <property type="match status" value="1"/>
</dbReference>
<comment type="function">
    <text evidence="1">Usually encoded in the trnK tRNA gene intron. Probably assists in splicing its own and other chloroplast group II introns.</text>
</comment>
<comment type="subcellular location">
    <subcellularLocation>
        <location>Plastid</location>
        <location>Chloroplast</location>
    </subcellularLocation>
</comment>
<comment type="similarity">
    <text evidence="1">Belongs to the intron maturase 2 family. MatK subfamily.</text>
</comment>
<protein>
    <recommendedName>
        <fullName evidence="1">Maturase K</fullName>
    </recommendedName>
    <alternativeName>
        <fullName evidence="1">Intron maturase</fullName>
    </alternativeName>
</protein>
<reference key="1">
    <citation type="journal article" date="2005" name="Taxon">
        <title>Phylogenetic relationships and biogeography of Ranunculus and allied genera (Ranunculaceae) in the Mediterranean region and in the European alpine system.</title>
        <authorList>
            <person name="Paun O."/>
            <person name="Lehnebach C."/>
            <person name="Johansson J.T."/>
            <person name="Lockhart P."/>
            <person name="Hoerandl E."/>
        </authorList>
    </citation>
    <scope>NUCLEOTIDE SEQUENCE [GENOMIC DNA]</scope>
</reference>
<gene>
    <name evidence="1" type="primary">matK</name>
</gene>
<organism>
    <name type="scientific">Ranunculus acris</name>
    <name type="common">Meadow buttercup</name>
    <dbReference type="NCBI Taxonomy" id="3447"/>
    <lineage>
        <taxon>Eukaryota</taxon>
        <taxon>Viridiplantae</taxon>
        <taxon>Streptophyta</taxon>
        <taxon>Embryophyta</taxon>
        <taxon>Tracheophyta</taxon>
        <taxon>Spermatophyta</taxon>
        <taxon>Magnoliopsida</taxon>
        <taxon>Ranunculales</taxon>
        <taxon>Ranunculaceae</taxon>
        <taxon>Ranunculoideae</taxon>
        <taxon>Ranunculeae</taxon>
        <taxon>Ranunculus</taxon>
    </lineage>
</organism>
<name>MATK_RANAC</name>
<keyword id="KW-0150">Chloroplast</keyword>
<keyword id="KW-0507">mRNA processing</keyword>
<keyword id="KW-0934">Plastid</keyword>
<keyword id="KW-0694">RNA-binding</keyword>
<keyword id="KW-0819">tRNA processing</keyword>